<evidence type="ECO:0000250" key="1"/>
<evidence type="ECO:0000255" key="2"/>
<evidence type="ECO:0000305" key="3"/>
<protein>
    <recommendedName>
        <fullName>Probable cytosol aminopeptidase</fullName>
        <ecNumber>3.4.11.1</ecNumber>
    </recommendedName>
    <alternativeName>
        <fullName>Leucine aminopeptidase</fullName>
        <shortName>LAP</shortName>
        <ecNumber>3.4.11.10</ecNumber>
    </alternativeName>
    <alternativeName>
        <fullName>Leucyl aminopeptidase</fullName>
    </alternativeName>
</protein>
<accession>P57823</accession>
<feature type="chain" id="PRO_0000165775" description="Probable cytosol aminopeptidase">
    <location>
        <begin position="1"/>
        <end position="494"/>
    </location>
</feature>
<feature type="active site" evidence="2">
    <location>
        <position position="276"/>
    </location>
</feature>
<feature type="active site" evidence="2">
    <location>
        <position position="350"/>
    </location>
</feature>
<feature type="binding site" evidence="1">
    <location>
        <position position="264"/>
    </location>
    <ligand>
        <name>Mn(2+)</name>
        <dbReference type="ChEBI" id="CHEBI:29035"/>
        <label>2</label>
    </ligand>
</feature>
<feature type="binding site" evidence="1">
    <location>
        <position position="269"/>
    </location>
    <ligand>
        <name>Mn(2+)</name>
        <dbReference type="ChEBI" id="CHEBI:29035"/>
        <label>1</label>
    </ligand>
</feature>
<feature type="binding site" evidence="1">
    <location>
        <position position="269"/>
    </location>
    <ligand>
        <name>Mn(2+)</name>
        <dbReference type="ChEBI" id="CHEBI:29035"/>
        <label>2</label>
    </ligand>
</feature>
<feature type="binding site" evidence="1">
    <location>
        <position position="287"/>
    </location>
    <ligand>
        <name>Mn(2+)</name>
        <dbReference type="ChEBI" id="CHEBI:29035"/>
        <label>2</label>
    </ligand>
</feature>
<feature type="binding site" evidence="1">
    <location>
        <position position="346"/>
    </location>
    <ligand>
        <name>Mn(2+)</name>
        <dbReference type="ChEBI" id="CHEBI:29035"/>
        <label>1</label>
    </ligand>
</feature>
<feature type="binding site" evidence="1">
    <location>
        <position position="348"/>
    </location>
    <ligand>
        <name>Mn(2+)</name>
        <dbReference type="ChEBI" id="CHEBI:29035"/>
        <label>1</label>
    </ligand>
</feature>
<feature type="binding site" evidence="1">
    <location>
        <position position="348"/>
    </location>
    <ligand>
        <name>Mn(2+)</name>
        <dbReference type="ChEBI" id="CHEBI:29035"/>
        <label>2</label>
    </ligand>
</feature>
<dbReference type="EC" id="3.4.11.1"/>
<dbReference type="EC" id="3.4.11.10"/>
<dbReference type="EMBL" id="AE004439">
    <property type="protein sequence ID" value="AAK02279.1"/>
    <property type="molecule type" value="Genomic_DNA"/>
</dbReference>
<dbReference type="RefSeq" id="WP_010906522.1">
    <property type="nucleotide sequence ID" value="NC_002663.1"/>
</dbReference>
<dbReference type="SMR" id="P57823"/>
<dbReference type="STRING" id="272843.PM0195"/>
<dbReference type="MEROPS" id="M17.003"/>
<dbReference type="EnsemblBacteria" id="AAK02279">
    <property type="protein sequence ID" value="AAK02279"/>
    <property type="gene ID" value="PM0195"/>
</dbReference>
<dbReference type="KEGG" id="pmu:PM0195"/>
<dbReference type="PATRIC" id="fig|272843.6.peg.200"/>
<dbReference type="HOGENOM" id="CLU_013734_2_2_6"/>
<dbReference type="OrthoDB" id="9809354at2"/>
<dbReference type="Proteomes" id="UP000000809">
    <property type="component" value="Chromosome"/>
</dbReference>
<dbReference type="GO" id="GO:0005737">
    <property type="term" value="C:cytoplasm"/>
    <property type="evidence" value="ECO:0007669"/>
    <property type="project" value="UniProtKB-SubCell"/>
</dbReference>
<dbReference type="GO" id="GO:0030145">
    <property type="term" value="F:manganese ion binding"/>
    <property type="evidence" value="ECO:0007669"/>
    <property type="project" value="UniProtKB-UniRule"/>
</dbReference>
<dbReference type="GO" id="GO:0070006">
    <property type="term" value="F:metalloaminopeptidase activity"/>
    <property type="evidence" value="ECO:0007669"/>
    <property type="project" value="InterPro"/>
</dbReference>
<dbReference type="GO" id="GO:0006508">
    <property type="term" value="P:proteolysis"/>
    <property type="evidence" value="ECO:0007669"/>
    <property type="project" value="UniProtKB-KW"/>
</dbReference>
<dbReference type="CDD" id="cd00433">
    <property type="entry name" value="Peptidase_M17"/>
    <property type="match status" value="1"/>
</dbReference>
<dbReference type="FunFam" id="3.40.630.10:FF:000004">
    <property type="entry name" value="Probable cytosol aminopeptidase"/>
    <property type="match status" value="1"/>
</dbReference>
<dbReference type="Gene3D" id="3.40.220.10">
    <property type="entry name" value="Leucine Aminopeptidase, subunit E, domain 1"/>
    <property type="match status" value="1"/>
</dbReference>
<dbReference type="Gene3D" id="3.40.630.10">
    <property type="entry name" value="Zn peptidases"/>
    <property type="match status" value="1"/>
</dbReference>
<dbReference type="HAMAP" id="MF_00181">
    <property type="entry name" value="Cytosol_peptidase_M17"/>
    <property type="match status" value="1"/>
</dbReference>
<dbReference type="InterPro" id="IPR011356">
    <property type="entry name" value="Leucine_aapep/pepB"/>
</dbReference>
<dbReference type="InterPro" id="IPR043472">
    <property type="entry name" value="Macro_dom-like"/>
</dbReference>
<dbReference type="InterPro" id="IPR000819">
    <property type="entry name" value="Peptidase_M17_C"/>
</dbReference>
<dbReference type="InterPro" id="IPR023042">
    <property type="entry name" value="Peptidase_M17_leu_NH2_pept"/>
</dbReference>
<dbReference type="InterPro" id="IPR008283">
    <property type="entry name" value="Peptidase_M17_N"/>
</dbReference>
<dbReference type="NCBIfam" id="NF002074">
    <property type="entry name" value="PRK00913.1-4"/>
    <property type="match status" value="1"/>
</dbReference>
<dbReference type="PANTHER" id="PTHR11963:SF23">
    <property type="entry name" value="CYTOSOL AMINOPEPTIDASE"/>
    <property type="match status" value="1"/>
</dbReference>
<dbReference type="PANTHER" id="PTHR11963">
    <property type="entry name" value="LEUCINE AMINOPEPTIDASE-RELATED"/>
    <property type="match status" value="1"/>
</dbReference>
<dbReference type="Pfam" id="PF00883">
    <property type="entry name" value="Peptidase_M17"/>
    <property type="match status" value="1"/>
</dbReference>
<dbReference type="Pfam" id="PF02789">
    <property type="entry name" value="Peptidase_M17_N"/>
    <property type="match status" value="1"/>
</dbReference>
<dbReference type="PRINTS" id="PR00481">
    <property type="entry name" value="LAMNOPPTDASE"/>
</dbReference>
<dbReference type="SUPFAM" id="SSF52949">
    <property type="entry name" value="Macro domain-like"/>
    <property type="match status" value="1"/>
</dbReference>
<dbReference type="SUPFAM" id="SSF53187">
    <property type="entry name" value="Zn-dependent exopeptidases"/>
    <property type="match status" value="1"/>
</dbReference>
<dbReference type="PROSITE" id="PS00631">
    <property type="entry name" value="CYTOSOL_AP"/>
    <property type="match status" value="1"/>
</dbReference>
<reference key="1">
    <citation type="journal article" date="2001" name="Proc. Natl. Acad. Sci. U.S.A.">
        <title>Complete genomic sequence of Pasteurella multocida Pm70.</title>
        <authorList>
            <person name="May B.J."/>
            <person name="Zhang Q."/>
            <person name="Li L.L."/>
            <person name="Paustian M.L."/>
            <person name="Whittam T.S."/>
            <person name="Kapur V."/>
        </authorList>
    </citation>
    <scope>NUCLEOTIDE SEQUENCE [LARGE SCALE GENOMIC DNA]</scope>
    <source>
        <strain>Pm70</strain>
    </source>
</reference>
<organism>
    <name type="scientific">Pasteurella multocida (strain Pm70)</name>
    <dbReference type="NCBI Taxonomy" id="272843"/>
    <lineage>
        <taxon>Bacteria</taxon>
        <taxon>Pseudomonadati</taxon>
        <taxon>Pseudomonadota</taxon>
        <taxon>Gammaproteobacteria</taxon>
        <taxon>Pasteurellales</taxon>
        <taxon>Pasteurellaceae</taxon>
        <taxon>Pasteurella</taxon>
    </lineage>
</organism>
<proteinExistence type="inferred from homology"/>
<comment type="function">
    <text evidence="1">Presumably involved in the processing and regular turnover of intracellular proteins. Catalyzes the removal of unsubstituted N-terminal amino acids from various peptides (By similarity).</text>
</comment>
<comment type="catalytic activity">
    <reaction>
        <text>Release of an N-terminal amino acid, Xaa-|-Yaa-, in which Xaa is preferably Leu, but may be other amino acids including Pro although not Arg or Lys, and Yaa may be Pro. Amino acid amides and methyl esters are also readily hydrolyzed, but rates on arylamides are exceedingly low.</text>
        <dbReference type="EC" id="3.4.11.1"/>
    </reaction>
</comment>
<comment type="catalytic activity">
    <reaction>
        <text>Release of an N-terminal amino acid, preferentially leucine, but not glutamic or aspartic acids.</text>
        <dbReference type="EC" id="3.4.11.10"/>
    </reaction>
</comment>
<comment type="cofactor">
    <cofactor evidence="1">
        <name>Mn(2+)</name>
        <dbReference type="ChEBI" id="CHEBI:29035"/>
    </cofactor>
    <text evidence="1">Binds 2 manganese ions per subunit.</text>
</comment>
<comment type="subcellular location">
    <subcellularLocation>
        <location evidence="1">Cytoplasm</location>
    </subcellularLocation>
</comment>
<comment type="similarity">
    <text evidence="3">Belongs to the peptidase M17 family.</text>
</comment>
<sequence length="494" mass="53300">MEYRVKSTALLDIKSNIIIGLYENGELSPSAQKIDEISQGYLSKLIQSGEIKGKLGQVLVLRHVPNYSAERVFVVGAGKKGEINEKQFKQLIQDTINAVKATSAKEVISYLSDIKIKDRDLYWNIRFSVETLETSIYQFEQFKSKKSEQDVALTDVIFSAEGDVAQQAVNHAKAIALGVRAAKDVANCPPNVCNPVYLAEQANALATRSDLIKTTVLGEKDMADLGMNAYLAVSQGSVNEAQLSLIEYRNHPNPDAKPIVLVGKGLTFDAGGISLKPAEGMDEMKYDMGGAASVYGVMNAIAELKLPLNVIGVLAGCENLPDGNAYRPGDILTTMKGLTVEVLNTDAEGRLVLCDTLTYVERFEPELVIDVATLTGACVVALGAHNSGLISTDDKLAKDLELAAAQSTDKAWRLPLGEEYQEQLKSNFADLANIGGRWGGAITAGAFLSNFTDKYRWAHLDIAGTAWLQGANKGATGRPVPLLVQFLINQATGK</sequence>
<keyword id="KW-0031">Aminopeptidase</keyword>
<keyword id="KW-0963">Cytoplasm</keyword>
<keyword id="KW-0378">Hydrolase</keyword>
<keyword id="KW-0464">Manganese</keyword>
<keyword id="KW-0479">Metal-binding</keyword>
<keyword id="KW-0645">Protease</keyword>
<keyword id="KW-1185">Reference proteome</keyword>
<name>AMPA_PASMU</name>
<gene>
    <name type="primary">pepA</name>
    <name type="ordered locus">PM0195</name>
</gene>